<proteinExistence type="inferred from homology"/>
<organism>
    <name type="scientific">Brucella ovis (strain ATCC 25840 / 63/290 / NCTC 10512)</name>
    <dbReference type="NCBI Taxonomy" id="444178"/>
    <lineage>
        <taxon>Bacteria</taxon>
        <taxon>Pseudomonadati</taxon>
        <taxon>Pseudomonadota</taxon>
        <taxon>Alphaproteobacteria</taxon>
        <taxon>Hyphomicrobiales</taxon>
        <taxon>Brucellaceae</taxon>
        <taxon>Brucella/Ochrobactrum group</taxon>
        <taxon>Brucella</taxon>
    </lineage>
</organism>
<feature type="signal peptide" evidence="2">
    <location>
        <begin position="1"/>
        <end position="23"/>
    </location>
</feature>
<feature type="chain" id="PRO_0000325859" description="Heme transporter BhuA">
    <location>
        <begin position="24"/>
        <end position="661"/>
    </location>
</feature>
<feature type="domain" description="TBDR plug" evidence="3">
    <location>
        <begin position="48"/>
        <end position="159"/>
    </location>
</feature>
<feature type="domain" description="TBDR beta-barrel" evidence="3">
    <location>
        <begin position="170"/>
        <end position="661"/>
    </location>
</feature>
<reference key="1">
    <citation type="journal article" date="2009" name="PLoS ONE">
        <title>Genome degradation in Brucella ovis corresponds with narrowing of its host range and tissue tropism.</title>
        <authorList>
            <person name="Tsolis R.M."/>
            <person name="Seshadri R."/>
            <person name="Santos R.L."/>
            <person name="Sangari F.J."/>
            <person name="Lobo J.M."/>
            <person name="de Jong M.F."/>
            <person name="Ren Q."/>
            <person name="Myers G."/>
            <person name="Brinkac L.M."/>
            <person name="Nelson W.C."/>
            <person name="Deboy R.T."/>
            <person name="Angiuoli S."/>
            <person name="Khouri H."/>
            <person name="Dimitrov G."/>
            <person name="Robinson J.R."/>
            <person name="Mulligan S."/>
            <person name="Walker R.L."/>
            <person name="Elzer P.E."/>
            <person name="Hassan K.A."/>
            <person name="Paulsen I.T."/>
        </authorList>
    </citation>
    <scope>NUCLEOTIDE SEQUENCE [LARGE SCALE GENOMIC DNA]</scope>
    <source>
        <strain>ATCC 25840 / 63/290 / NCTC 10512</strain>
    </source>
</reference>
<name>BHUA_BRUO2</name>
<comment type="function">
    <text evidence="1">Heme transporter.</text>
</comment>
<comment type="subcellular location">
    <subcellularLocation>
        <location evidence="3">Cell outer membrane</location>
        <topology evidence="3">Multi-pass membrane protein</topology>
    </subcellularLocation>
</comment>
<comment type="induction">
    <text evidence="1">Induced in absence of iron.</text>
</comment>
<comment type="similarity">
    <text evidence="4">Belongs to the TonB-dependent receptor family.</text>
</comment>
<comment type="sequence caution" evidence="4">
    <conflict type="erroneous initiation">
        <sequence resource="EMBL-CDS" id="ABQ62341"/>
    </conflict>
</comment>
<dbReference type="EMBL" id="CP000709">
    <property type="protein sequence ID" value="ABQ62341.1"/>
    <property type="status" value="ALT_INIT"/>
    <property type="molecule type" value="Genomic_DNA"/>
</dbReference>
<dbReference type="RefSeq" id="WP_006014867.1">
    <property type="nucleotide sequence ID" value="NC_009504.1"/>
</dbReference>
<dbReference type="SMR" id="A5VW32"/>
<dbReference type="GeneID" id="45126449"/>
<dbReference type="KEGG" id="bov:BOV_A1093"/>
<dbReference type="HOGENOM" id="CLU_008287_19_4_5"/>
<dbReference type="PhylomeDB" id="A5VW32"/>
<dbReference type="Proteomes" id="UP000006383">
    <property type="component" value="Chromosome II"/>
</dbReference>
<dbReference type="GO" id="GO:0009279">
    <property type="term" value="C:cell outer membrane"/>
    <property type="evidence" value="ECO:0007669"/>
    <property type="project" value="UniProtKB-SubCell"/>
</dbReference>
<dbReference type="GO" id="GO:0015344">
    <property type="term" value="F:siderophore uptake transmembrane transporter activity"/>
    <property type="evidence" value="ECO:0007669"/>
    <property type="project" value="TreeGrafter"/>
</dbReference>
<dbReference type="CDD" id="cd01347">
    <property type="entry name" value="ligand_gated_channel"/>
    <property type="match status" value="1"/>
</dbReference>
<dbReference type="Gene3D" id="2.40.170.20">
    <property type="entry name" value="TonB-dependent receptor, beta-barrel domain"/>
    <property type="match status" value="1"/>
</dbReference>
<dbReference type="Gene3D" id="2.170.130.10">
    <property type="entry name" value="TonB-dependent receptor, plug domain"/>
    <property type="match status" value="1"/>
</dbReference>
<dbReference type="InterPro" id="IPR012910">
    <property type="entry name" value="Plug_dom"/>
</dbReference>
<dbReference type="InterPro" id="IPR037066">
    <property type="entry name" value="Plug_dom_sf"/>
</dbReference>
<dbReference type="InterPro" id="IPR039426">
    <property type="entry name" value="TonB-dep_rcpt-like"/>
</dbReference>
<dbReference type="InterPro" id="IPR000531">
    <property type="entry name" value="TonB-dep_rcpt_b-brl"/>
</dbReference>
<dbReference type="InterPro" id="IPR036942">
    <property type="entry name" value="TonB_rcpt_b-brl_sf"/>
</dbReference>
<dbReference type="PANTHER" id="PTHR30069:SF41">
    <property type="entry name" value="HEME_HEMOPEXIN UTILIZATION PROTEIN C"/>
    <property type="match status" value="1"/>
</dbReference>
<dbReference type="PANTHER" id="PTHR30069">
    <property type="entry name" value="TONB-DEPENDENT OUTER MEMBRANE RECEPTOR"/>
    <property type="match status" value="1"/>
</dbReference>
<dbReference type="Pfam" id="PF07715">
    <property type="entry name" value="Plug"/>
    <property type="match status" value="1"/>
</dbReference>
<dbReference type="Pfam" id="PF00593">
    <property type="entry name" value="TonB_dep_Rec_b-barrel"/>
    <property type="match status" value="1"/>
</dbReference>
<dbReference type="SUPFAM" id="SSF56935">
    <property type="entry name" value="Porins"/>
    <property type="match status" value="1"/>
</dbReference>
<dbReference type="PROSITE" id="PS52016">
    <property type="entry name" value="TONB_DEPENDENT_REC_3"/>
    <property type="match status" value="1"/>
</dbReference>
<evidence type="ECO:0000250" key="1"/>
<evidence type="ECO:0000255" key="2"/>
<evidence type="ECO:0000255" key="3">
    <source>
        <dbReference type="PROSITE-ProRule" id="PRU01360"/>
    </source>
</evidence>
<evidence type="ECO:0000305" key="4"/>
<keyword id="KW-0998">Cell outer membrane</keyword>
<keyword id="KW-0472">Membrane</keyword>
<keyword id="KW-0675">Receptor</keyword>
<keyword id="KW-0732">Signal</keyword>
<keyword id="KW-0798">TonB box</keyword>
<keyword id="KW-0812">Transmembrane</keyword>
<keyword id="KW-1134">Transmembrane beta strand</keyword>
<keyword id="KW-0813">Transport</keyword>
<accession>A5VW32</accession>
<protein>
    <recommendedName>
        <fullName>Heme transporter BhuA</fullName>
    </recommendedName>
</protein>
<gene>
    <name type="primary">bhuA</name>
    <name type="ordered locus">BOV_A1093</name>
</gene>
<sequence>MKFTRTLVLASTSLLATVATSQAQEVKRDTKKQGEVVLKPITIISHGKDNIEATGGTVLTYKDIEKLQPANVSELFSRQSSIAVSGGGGPSKRIHVLGMEQSNLAVSVDGVPQTATSWHHTGSNVIDPAFLKRVEVEAGAAAADSGFGAAAGAIRYETVNALDLLEPGKTFGARIIGSYGTNGRGFSGSTAAYGLKDGFDWLLMLHGTSGHNYKNGDGTEILGTEPAARNILGKAGYEFDGNRIDIGYERSRDKADRLIKMNMGLPGDTEYPLEVARDSVNIKYTRTDATDMWDPEVQLYYNRNDYWRNDYQNRTNGNMILKEDLYGGKLQNTFTIDYGKITAGIDFGKHDYNTDNYGHNDRRYRKFNTQQVGAFTQGRFEFDNGFSLSTGARYDYSRFADWNDEVFSDSGASVNGTLSYKFNEHIEVFAGASRTWLGYVLGDYGYVHARNNAFYTDPTFSPGRARNYKAGVNFGGADWSAGITLFDTRIAGLPNYDSQKLGNDPEEYRSRGFTLNARYIWNYTTIGATFTKAKVTAGDDPVLPNSGSFMPIGDMATLFIDQEIPDYNMKVGATLAWAGRISDEAATAANFYDQPAYTVVNAYAEWNPPAVKNMTLRVGVENLFNENYYERTSFAPSQNRGGIDPVWAPGRTFTFQTAFKF</sequence>